<feature type="chain" id="PRO_0000111788" description="5'-nucleotidase SurE">
    <location>
        <begin position="1"/>
        <end position="251"/>
    </location>
</feature>
<feature type="binding site" evidence="1">
    <location>
        <position position="9"/>
    </location>
    <ligand>
        <name>a divalent metal cation</name>
        <dbReference type="ChEBI" id="CHEBI:60240"/>
    </ligand>
</feature>
<feature type="binding site" evidence="1">
    <location>
        <position position="10"/>
    </location>
    <ligand>
        <name>a divalent metal cation</name>
        <dbReference type="ChEBI" id="CHEBI:60240"/>
    </ligand>
</feature>
<feature type="binding site" evidence="1">
    <location>
        <position position="40"/>
    </location>
    <ligand>
        <name>a divalent metal cation</name>
        <dbReference type="ChEBI" id="CHEBI:60240"/>
    </ligand>
</feature>
<feature type="binding site" evidence="1">
    <location>
        <position position="94"/>
    </location>
    <ligand>
        <name>a divalent metal cation</name>
        <dbReference type="ChEBI" id="CHEBI:60240"/>
    </ligand>
</feature>
<feature type="strand" evidence="2">
    <location>
        <begin position="3"/>
        <end position="7"/>
    </location>
</feature>
<feature type="helix" evidence="2">
    <location>
        <begin position="15"/>
        <end position="24"/>
    </location>
</feature>
<feature type="turn" evidence="2">
    <location>
        <begin position="25"/>
        <end position="27"/>
    </location>
</feature>
<feature type="strand" evidence="2">
    <location>
        <begin position="28"/>
        <end position="37"/>
    </location>
</feature>
<feature type="strand" evidence="2">
    <location>
        <begin position="52"/>
        <end position="58"/>
    </location>
</feature>
<feature type="strand" evidence="2">
    <location>
        <begin position="61"/>
        <end position="64"/>
    </location>
</feature>
<feature type="helix" evidence="2">
    <location>
        <begin position="69"/>
        <end position="78"/>
    </location>
</feature>
<feature type="turn" evidence="2">
    <location>
        <begin position="79"/>
        <end position="83"/>
    </location>
</feature>
<feature type="strand" evidence="2">
    <location>
        <begin position="87"/>
        <end position="96"/>
    </location>
</feature>
<feature type="helix" evidence="2">
    <location>
        <begin position="100"/>
        <end position="105"/>
    </location>
</feature>
<feature type="helix" evidence="2">
    <location>
        <begin position="107"/>
        <end position="117"/>
    </location>
</feature>
<feature type="strand" evidence="2">
    <location>
        <begin position="122"/>
        <end position="128"/>
    </location>
</feature>
<feature type="strand" evidence="2">
    <location>
        <begin position="130"/>
        <end position="132"/>
    </location>
</feature>
<feature type="helix" evidence="2">
    <location>
        <begin position="135"/>
        <end position="152"/>
    </location>
</feature>
<feature type="strand" evidence="2">
    <location>
        <begin position="158"/>
        <end position="167"/>
    </location>
</feature>
<feature type="helix" evidence="2">
    <location>
        <begin position="169"/>
        <end position="171"/>
    </location>
</feature>
<feature type="strand" evidence="2">
    <location>
        <begin position="174"/>
        <end position="177"/>
    </location>
</feature>
<feature type="strand" evidence="2">
    <location>
        <begin position="184"/>
        <end position="193"/>
    </location>
</feature>
<feature type="strand" evidence="2">
    <location>
        <begin position="199"/>
        <end position="207"/>
    </location>
</feature>
<feature type="turn" evidence="2">
    <location>
        <begin position="208"/>
        <end position="211"/>
    </location>
</feature>
<feature type="helix" evidence="2">
    <location>
        <begin position="217"/>
        <end position="222"/>
    </location>
</feature>
<feature type="strand" evidence="2">
    <location>
        <begin position="225"/>
        <end position="233"/>
    </location>
</feature>
<feature type="helix" evidence="2">
    <location>
        <begin position="238"/>
        <end position="248"/>
    </location>
</feature>
<protein>
    <recommendedName>
        <fullName evidence="1">5'-nucleotidase SurE</fullName>
        <ecNumber evidence="1">3.1.3.5</ecNumber>
    </recommendedName>
    <alternativeName>
        <fullName evidence="1">Nucleoside 5'-monophosphate phosphohydrolase</fullName>
    </alternativeName>
</protein>
<gene>
    <name evidence="1" type="primary">surE</name>
    <name type="ordered locus">aq_832</name>
</gene>
<sequence>MPTFLLVNDDGYFSPGINALREALKSLGRVVVVAPDRNLSGVGHSLTFTEPLKMRKIDTDFYTVIDGTPADCVHLGYRVILEEKKPDLVLSGINEGPNLGEDITYSGTVSGAMEGRILGIPSIAFSAFGRENIMFEEIAKVCVDIVKKVLNEGIPEDTYLNVNIPNLRYEEIKGIKVTRQGKRAYKERVFKYIDPYGKPFYWIAAEEFGWHAEEGTDYWAVLNGYVSVTPLHLDLTNYKVMKSIKYLEDSP</sequence>
<name>SURE_AQUAE</name>
<comment type="function">
    <text evidence="1">Nucleotidase that shows phosphatase activity on nucleoside 5'-monophosphates.</text>
</comment>
<comment type="catalytic activity">
    <reaction evidence="1">
        <text>a ribonucleoside 5'-phosphate + H2O = a ribonucleoside + phosphate</text>
        <dbReference type="Rhea" id="RHEA:12484"/>
        <dbReference type="ChEBI" id="CHEBI:15377"/>
        <dbReference type="ChEBI" id="CHEBI:18254"/>
        <dbReference type="ChEBI" id="CHEBI:43474"/>
        <dbReference type="ChEBI" id="CHEBI:58043"/>
        <dbReference type="EC" id="3.1.3.5"/>
    </reaction>
</comment>
<comment type="cofactor">
    <cofactor evidence="1">
        <name>a divalent metal cation</name>
        <dbReference type="ChEBI" id="CHEBI:60240"/>
    </cofactor>
    <text evidence="1">Binds 1 divalent metal cation per subunit.</text>
</comment>
<comment type="subcellular location">
    <subcellularLocation>
        <location evidence="1">Cytoplasm</location>
    </subcellularLocation>
</comment>
<comment type="similarity">
    <text evidence="1">Belongs to the SurE nucleotidase family.</text>
</comment>
<proteinExistence type="evidence at protein level"/>
<keyword id="KW-0002">3D-structure</keyword>
<keyword id="KW-0963">Cytoplasm</keyword>
<keyword id="KW-0378">Hydrolase</keyword>
<keyword id="KW-0479">Metal-binding</keyword>
<keyword id="KW-0547">Nucleotide-binding</keyword>
<keyword id="KW-1185">Reference proteome</keyword>
<reference key="1">
    <citation type="journal article" date="1998" name="Nature">
        <title>The complete genome of the hyperthermophilic bacterium Aquifex aeolicus.</title>
        <authorList>
            <person name="Deckert G."/>
            <person name="Warren P.V."/>
            <person name="Gaasterland T."/>
            <person name="Young W.G."/>
            <person name="Lenox A.L."/>
            <person name="Graham D.E."/>
            <person name="Overbeek R."/>
            <person name="Snead M.A."/>
            <person name="Keller M."/>
            <person name="Aujay M."/>
            <person name="Huber R."/>
            <person name="Feldman R.A."/>
            <person name="Short J.M."/>
            <person name="Olsen G.J."/>
            <person name="Swanson R.V."/>
        </authorList>
    </citation>
    <scope>NUCLEOTIDE SEQUENCE [LARGE SCALE GENOMIC DNA]</scope>
    <source>
        <strain>VF5</strain>
    </source>
</reference>
<accession>O67004</accession>
<organism>
    <name type="scientific">Aquifex aeolicus (strain VF5)</name>
    <dbReference type="NCBI Taxonomy" id="224324"/>
    <lineage>
        <taxon>Bacteria</taxon>
        <taxon>Pseudomonadati</taxon>
        <taxon>Aquificota</taxon>
        <taxon>Aquificia</taxon>
        <taxon>Aquificales</taxon>
        <taxon>Aquificaceae</taxon>
        <taxon>Aquifex</taxon>
    </lineage>
</organism>
<dbReference type="EC" id="3.1.3.5" evidence="1"/>
<dbReference type="EMBL" id="AE000657">
    <property type="protein sequence ID" value="AAC06967.1"/>
    <property type="molecule type" value="Genomic_DNA"/>
</dbReference>
<dbReference type="PIR" id="A70372">
    <property type="entry name" value="A70372"/>
</dbReference>
<dbReference type="RefSeq" id="NP_213565.1">
    <property type="nucleotide sequence ID" value="NC_000918.1"/>
</dbReference>
<dbReference type="RefSeq" id="WP_010880503.1">
    <property type="nucleotide sequence ID" value="NC_000918.1"/>
</dbReference>
<dbReference type="PDB" id="2WQK">
    <property type="method" value="X-ray"/>
    <property type="resolution" value="1.50 A"/>
    <property type="chains" value="A/B=1-251"/>
</dbReference>
<dbReference type="PDBsum" id="2WQK"/>
<dbReference type="SMR" id="O67004"/>
<dbReference type="FunCoup" id="O67004">
    <property type="interactions" value="169"/>
</dbReference>
<dbReference type="STRING" id="224324.aq_832"/>
<dbReference type="EnsemblBacteria" id="AAC06967">
    <property type="protein sequence ID" value="AAC06967"/>
    <property type="gene ID" value="aq_832"/>
</dbReference>
<dbReference type="KEGG" id="aae:aq_832"/>
<dbReference type="PATRIC" id="fig|224324.8.peg.650"/>
<dbReference type="eggNOG" id="COG0496">
    <property type="taxonomic scope" value="Bacteria"/>
</dbReference>
<dbReference type="HOGENOM" id="CLU_045192_1_2_0"/>
<dbReference type="InParanoid" id="O67004"/>
<dbReference type="OrthoDB" id="9780815at2"/>
<dbReference type="EvolutionaryTrace" id="O67004"/>
<dbReference type="Proteomes" id="UP000000798">
    <property type="component" value="Chromosome"/>
</dbReference>
<dbReference type="GO" id="GO:0005737">
    <property type="term" value="C:cytoplasm"/>
    <property type="evidence" value="ECO:0007669"/>
    <property type="project" value="UniProtKB-SubCell"/>
</dbReference>
<dbReference type="GO" id="GO:0008254">
    <property type="term" value="F:3'-nucleotidase activity"/>
    <property type="evidence" value="ECO:0000318"/>
    <property type="project" value="GO_Central"/>
</dbReference>
<dbReference type="GO" id="GO:0008253">
    <property type="term" value="F:5'-nucleotidase activity"/>
    <property type="evidence" value="ECO:0000318"/>
    <property type="project" value="GO_Central"/>
</dbReference>
<dbReference type="GO" id="GO:0004309">
    <property type="term" value="F:exopolyphosphatase activity"/>
    <property type="evidence" value="ECO:0000318"/>
    <property type="project" value="GO_Central"/>
</dbReference>
<dbReference type="GO" id="GO:0046872">
    <property type="term" value="F:metal ion binding"/>
    <property type="evidence" value="ECO:0007669"/>
    <property type="project" value="UniProtKB-UniRule"/>
</dbReference>
<dbReference type="GO" id="GO:0000166">
    <property type="term" value="F:nucleotide binding"/>
    <property type="evidence" value="ECO:0007669"/>
    <property type="project" value="UniProtKB-KW"/>
</dbReference>
<dbReference type="FunFam" id="3.40.1210.10:FF:000001">
    <property type="entry name" value="5'/3'-nucleotidase SurE"/>
    <property type="match status" value="1"/>
</dbReference>
<dbReference type="Gene3D" id="3.40.1210.10">
    <property type="entry name" value="Survival protein SurE-like phosphatase/nucleotidase"/>
    <property type="match status" value="1"/>
</dbReference>
<dbReference type="HAMAP" id="MF_00060">
    <property type="entry name" value="SurE"/>
    <property type="match status" value="1"/>
</dbReference>
<dbReference type="InterPro" id="IPR030048">
    <property type="entry name" value="SurE"/>
</dbReference>
<dbReference type="InterPro" id="IPR002828">
    <property type="entry name" value="SurE-like_Pase/nucleotidase"/>
</dbReference>
<dbReference type="InterPro" id="IPR036523">
    <property type="entry name" value="SurE-like_sf"/>
</dbReference>
<dbReference type="NCBIfam" id="NF001489">
    <property type="entry name" value="PRK00346.1-3"/>
    <property type="match status" value="1"/>
</dbReference>
<dbReference type="NCBIfam" id="NF001490">
    <property type="entry name" value="PRK00346.1-4"/>
    <property type="match status" value="1"/>
</dbReference>
<dbReference type="NCBIfam" id="TIGR00087">
    <property type="entry name" value="surE"/>
    <property type="match status" value="1"/>
</dbReference>
<dbReference type="PANTHER" id="PTHR30457">
    <property type="entry name" value="5'-NUCLEOTIDASE SURE"/>
    <property type="match status" value="1"/>
</dbReference>
<dbReference type="PANTHER" id="PTHR30457:SF12">
    <property type="entry name" value="5'_3'-NUCLEOTIDASE SURE"/>
    <property type="match status" value="1"/>
</dbReference>
<dbReference type="Pfam" id="PF01975">
    <property type="entry name" value="SurE"/>
    <property type="match status" value="1"/>
</dbReference>
<dbReference type="SUPFAM" id="SSF64167">
    <property type="entry name" value="SurE-like"/>
    <property type="match status" value="1"/>
</dbReference>
<evidence type="ECO:0000255" key="1">
    <source>
        <dbReference type="HAMAP-Rule" id="MF_00060"/>
    </source>
</evidence>
<evidence type="ECO:0007829" key="2">
    <source>
        <dbReference type="PDB" id="2WQK"/>
    </source>
</evidence>